<evidence type="ECO:0000255" key="1">
    <source>
        <dbReference type="HAMAP-Rule" id="MF_00636"/>
    </source>
</evidence>
<accession>A3DBM5</accession>
<protein>
    <recommendedName>
        <fullName evidence="1">Nucleotide-binding protein Cthe_0113</fullName>
    </recommendedName>
</protein>
<proteinExistence type="inferred from homology"/>
<organism>
    <name type="scientific">Acetivibrio thermocellus (strain ATCC 27405 / DSM 1237 / JCM 9322 / NBRC 103400 / NCIMB 10682 / NRRL B-4536 / VPI 7372)</name>
    <name type="common">Clostridium thermocellum</name>
    <dbReference type="NCBI Taxonomy" id="203119"/>
    <lineage>
        <taxon>Bacteria</taxon>
        <taxon>Bacillati</taxon>
        <taxon>Bacillota</taxon>
        <taxon>Clostridia</taxon>
        <taxon>Eubacteriales</taxon>
        <taxon>Oscillospiraceae</taxon>
        <taxon>Acetivibrio</taxon>
    </lineage>
</organism>
<reference key="1">
    <citation type="submission" date="2007-02" db="EMBL/GenBank/DDBJ databases">
        <title>Complete sequence of Clostridium thermocellum ATCC 27405.</title>
        <authorList>
            <consortium name="US DOE Joint Genome Institute"/>
            <person name="Copeland A."/>
            <person name="Lucas S."/>
            <person name="Lapidus A."/>
            <person name="Barry K."/>
            <person name="Detter J.C."/>
            <person name="Glavina del Rio T."/>
            <person name="Hammon N."/>
            <person name="Israni S."/>
            <person name="Dalin E."/>
            <person name="Tice H."/>
            <person name="Pitluck S."/>
            <person name="Chertkov O."/>
            <person name="Brettin T."/>
            <person name="Bruce D."/>
            <person name="Han C."/>
            <person name="Tapia R."/>
            <person name="Gilna P."/>
            <person name="Schmutz J."/>
            <person name="Larimer F."/>
            <person name="Land M."/>
            <person name="Hauser L."/>
            <person name="Kyrpides N."/>
            <person name="Mikhailova N."/>
            <person name="Wu J.H.D."/>
            <person name="Newcomb M."/>
            <person name="Richardson P."/>
        </authorList>
    </citation>
    <scope>NUCLEOTIDE SEQUENCE [LARGE SCALE GENOMIC DNA]</scope>
    <source>
        <strain>ATCC 27405 / DSM 1237 / JCM 9322 / NBRC 103400 / NCIMB 10682 / NRRL B-4536 / VPI 7372</strain>
    </source>
</reference>
<comment type="function">
    <text evidence="1">Displays ATPase and GTPase activities.</text>
</comment>
<comment type="similarity">
    <text evidence="1">Belongs to the RapZ-like family.</text>
</comment>
<keyword id="KW-0067">ATP-binding</keyword>
<keyword id="KW-0342">GTP-binding</keyword>
<keyword id="KW-0547">Nucleotide-binding</keyword>
<keyword id="KW-1185">Reference proteome</keyword>
<feature type="chain" id="PRO_1000056819" description="Nucleotide-binding protein Cthe_0113">
    <location>
        <begin position="1"/>
        <end position="291"/>
    </location>
</feature>
<feature type="binding site" evidence="1">
    <location>
        <begin position="8"/>
        <end position="15"/>
    </location>
    <ligand>
        <name>ATP</name>
        <dbReference type="ChEBI" id="CHEBI:30616"/>
    </ligand>
</feature>
<feature type="binding site" evidence="1">
    <location>
        <begin position="59"/>
        <end position="62"/>
    </location>
    <ligand>
        <name>GTP</name>
        <dbReference type="ChEBI" id="CHEBI:37565"/>
    </ligand>
</feature>
<gene>
    <name type="ordered locus">Cthe_0113</name>
</gene>
<name>Y113_ACET2</name>
<sequence length="291" mass="33136">MRLLIITGISGAGKSLVVKYLEDIGFFCVDNLPPLLIGKFAEICLKSRGKISKVALVIDIRGGELFNDLVPELNALKESGIDYEILFLEASDQVLIKRYKESRRIHPLAPEGRLIKGIKTEREILSQIRKNATYIIDTSNLTPRQLKEEILAIFVEGRKFDGMIVNIISFGFKYGIPIECDLVFDVRFIPNPYYIESMKYKTGKDEEVRNYVMSFAETAEFMTKLKDLVDFLIPNYIKEGKSQLVIGVGCTGGRHRSVAISEALFSYLCGREHRVFIDHRDIDKDGRSNRR</sequence>
<dbReference type="EMBL" id="CP000568">
    <property type="protein sequence ID" value="ABN51354.1"/>
    <property type="molecule type" value="Genomic_DNA"/>
</dbReference>
<dbReference type="SMR" id="A3DBM5"/>
<dbReference type="STRING" id="203119.Cthe_0113"/>
<dbReference type="GeneID" id="35802966"/>
<dbReference type="KEGG" id="cth:Cthe_0113"/>
<dbReference type="eggNOG" id="COG1660">
    <property type="taxonomic scope" value="Bacteria"/>
</dbReference>
<dbReference type="HOGENOM" id="CLU_059558_0_0_9"/>
<dbReference type="OrthoDB" id="9784461at2"/>
<dbReference type="Proteomes" id="UP000002145">
    <property type="component" value="Chromosome"/>
</dbReference>
<dbReference type="GO" id="GO:0005524">
    <property type="term" value="F:ATP binding"/>
    <property type="evidence" value="ECO:0007669"/>
    <property type="project" value="UniProtKB-UniRule"/>
</dbReference>
<dbReference type="GO" id="GO:0005525">
    <property type="term" value="F:GTP binding"/>
    <property type="evidence" value="ECO:0007669"/>
    <property type="project" value="UniProtKB-UniRule"/>
</dbReference>
<dbReference type="Gene3D" id="3.40.50.300">
    <property type="entry name" value="P-loop containing nucleotide triphosphate hydrolases"/>
    <property type="match status" value="1"/>
</dbReference>
<dbReference type="HAMAP" id="MF_00636">
    <property type="entry name" value="RapZ_like"/>
    <property type="match status" value="1"/>
</dbReference>
<dbReference type="InterPro" id="IPR027417">
    <property type="entry name" value="P-loop_NTPase"/>
</dbReference>
<dbReference type="InterPro" id="IPR005337">
    <property type="entry name" value="RapZ-like"/>
</dbReference>
<dbReference type="InterPro" id="IPR053930">
    <property type="entry name" value="RapZ-like_N"/>
</dbReference>
<dbReference type="InterPro" id="IPR053931">
    <property type="entry name" value="RapZ_C"/>
</dbReference>
<dbReference type="NCBIfam" id="NF003828">
    <property type="entry name" value="PRK05416.1"/>
    <property type="match status" value="1"/>
</dbReference>
<dbReference type="PANTHER" id="PTHR30448">
    <property type="entry name" value="RNASE ADAPTER PROTEIN RAPZ"/>
    <property type="match status" value="1"/>
</dbReference>
<dbReference type="PANTHER" id="PTHR30448:SF0">
    <property type="entry name" value="RNASE ADAPTER PROTEIN RAPZ"/>
    <property type="match status" value="1"/>
</dbReference>
<dbReference type="Pfam" id="PF22740">
    <property type="entry name" value="PapZ_C"/>
    <property type="match status" value="1"/>
</dbReference>
<dbReference type="Pfam" id="PF03668">
    <property type="entry name" value="RapZ-like_N"/>
    <property type="match status" value="1"/>
</dbReference>
<dbReference type="PIRSF" id="PIRSF005052">
    <property type="entry name" value="P-loopkin"/>
    <property type="match status" value="1"/>
</dbReference>
<dbReference type="SUPFAM" id="SSF52540">
    <property type="entry name" value="P-loop containing nucleoside triphosphate hydrolases"/>
    <property type="match status" value="1"/>
</dbReference>